<sequence>MSQQIKLLVGLANPGPEYAKTRHNAGAWVVEELARVHNITLKNEAKFYGLTGRIVMNGQELRLLIPTTFMNLSGKAIAALAKFYQIQPEEIMVAHDELDLPPGIAKFKKGGGHGGHNGLRDTISKLGNNKEFYRLRIGIGHPGHKDKVAGFVLGKAPASEQSLLDATVDESVRCLDILIKDGLSKAQNRLHTFKAE</sequence>
<reference key="1">
    <citation type="submission" date="2002-12" db="EMBL/GenBank/DDBJ databases">
        <title>Complete genome sequence of Vibrio vulnificus CMCP6.</title>
        <authorList>
            <person name="Rhee J.H."/>
            <person name="Kim S.Y."/>
            <person name="Chung S.S."/>
            <person name="Kim J.J."/>
            <person name="Moon Y.H."/>
            <person name="Jeong H."/>
            <person name="Choy H.E."/>
        </authorList>
    </citation>
    <scope>NUCLEOTIDE SEQUENCE [LARGE SCALE GENOMIC DNA]</scope>
    <source>
        <strain>CMCP6</strain>
    </source>
</reference>
<protein>
    <recommendedName>
        <fullName evidence="1">Peptidyl-tRNA hydrolase</fullName>
        <shortName evidence="1">Pth</shortName>
        <ecNumber evidence="1">3.1.1.29</ecNumber>
    </recommendedName>
</protein>
<keyword id="KW-0963">Cytoplasm</keyword>
<keyword id="KW-0378">Hydrolase</keyword>
<keyword id="KW-0694">RNA-binding</keyword>
<keyword id="KW-0820">tRNA-binding</keyword>
<proteinExistence type="inferred from homology"/>
<dbReference type="EC" id="3.1.1.29" evidence="1"/>
<dbReference type="EMBL" id="AE016795">
    <property type="protein sequence ID" value="AAO08794.2"/>
    <property type="molecule type" value="Genomic_DNA"/>
</dbReference>
<dbReference type="RefSeq" id="WP_011078372.1">
    <property type="nucleotide sequence ID" value="NC_004459.3"/>
</dbReference>
<dbReference type="SMR" id="Q8DFF4"/>
<dbReference type="KEGG" id="vvu:VV1_0258"/>
<dbReference type="HOGENOM" id="CLU_062456_3_1_6"/>
<dbReference type="Proteomes" id="UP000002275">
    <property type="component" value="Chromosome 1"/>
</dbReference>
<dbReference type="GO" id="GO:0005737">
    <property type="term" value="C:cytoplasm"/>
    <property type="evidence" value="ECO:0007669"/>
    <property type="project" value="UniProtKB-SubCell"/>
</dbReference>
<dbReference type="GO" id="GO:0004045">
    <property type="term" value="F:peptidyl-tRNA hydrolase activity"/>
    <property type="evidence" value="ECO:0007669"/>
    <property type="project" value="UniProtKB-UniRule"/>
</dbReference>
<dbReference type="GO" id="GO:0000049">
    <property type="term" value="F:tRNA binding"/>
    <property type="evidence" value="ECO:0007669"/>
    <property type="project" value="UniProtKB-UniRule"/>
</dbReference>
<dbReference type="GO" id="GO:0006515">
    <property type="term" value="P:protein quality control for misfolded or incompletely synthesized proteins"/>
    <property type="evidence" value="ECO:0007669"/>
    <property type="project" value="UniProtKB-UniRule"/>
</dbReference>
<dbReference type="GO" id="GO:0072344">
    <property type="term" value="P:rescue of stalled ribosome"/>
    <property type="evidence" value="ECO:0007669"/>
    <property type="project" value="UniProtKB-UniRule"/>
</dbReference>
<dbReference type="CDD" id="cd00462">
    <property type="entry name" value="PTH"/>
    <property type="match status" value="1"/>
</dbReference>
<dbReference type="FunFam" id="3.40.50.1470:FF:000001">
    <property type="entry name" value="Peptidyl-tRNA hydrolase"/>
    <property type="match status" value="1"/>
</dbReference>
<dbReference type="Gene3D" id="3.40.50.1470">
    <property type="entry name" value="Peptidyl-tRNA hydrolase"/>
    <property type="match status" value="1"/>
</dbReference>
<dbReference type="HAMAP" id="MF_00083">
    <property type="entry name" value="Pept_tRNA_hydro_bact"/>
    <property type="match status" value="1"/>
</dbReference>
<dbReference type="InterPro" id="IPR001328">
    <property type="entry name" value="Pept_tRNA_hydro"/>
</dbReference>
<dbReference type="InterPro" id="IPR018171">
    <property type="entry name" value="Pept_tRNA_hydro_CS"/>
</dbReference>
<dbReference type="InterPro" id="IPR036416">
    <property type="entry name" value="Pept_tRNA_hydro_sf"/>
</dbReference>
<dbReference type="NCBIfam" id="TIGR00447">
    <property type="entry name" value="pth"/>
    <property type="match status" value="1"/>
</dbReference>
<dbReference type="PANTHER" id="PTHR17224">
    <property type="entry name" value="PEPTIDYL-TRNA HYDROLASE"/>
    <property type="match status" value="1"/>
</dbReference>
<dbReference type="PANTHER" id="PTHR17224:SF1">
    <property type="entry name" value="PEPTIDYL-TRNA HYDROLASE"/>
    <property type="match status" value="1"/>
</dbReference>
<dbReference type="Pfam" id="PF01195">
    <property type="entry name" value="Pept_tRNA_hydro"/>
    <property type="match status" value="1"/>
</dbReference>
<dbReference type="SUPFAM" id="SSF53178">
    <property type="entry name" value="Peptidyl-tRNA hydrolase-like"/>
    <property type="match status" value="1"/>
</dbReference>
<dbReference type="PROSITE" id="PS01195">
    <property type="entry name" value="PEPT_TRNA_HYDROL_1"/>
    <property type="match status" value="1"/>
</dbReference>
<dbReference type="PROSITE" id="PS01196">
    <property type="entry name" value="PEPT_TRNA_HYDROL_2"/>
    <property type="match status" value="1"/>
</dbReference>
<comment type="function">
    <text evidence="1">Hydrolyzes ribosome-free peptidyl-tRNAs (with 1 or more amino acids incorporated), which drop off the ribosome during protein synthesis, or as a result of ribosome stalling.</text>
</comment>
<comment type="function">
    <text evidence="1">Catalyzes the release of premature peptidyl moieties from peptidyl-tRNA molecules trapped in stalled 50S ribosomal subunits, and thus maintains levels of free tRNAs and 50S ribosomes.</text>
</comment>
<comment type="catalytic activity">
    <reaction evidence="1">
        <text>an N-acyl-L-alpha-aminoacyl-tRNA + H2O = an N-acyl-L-amino acid + a tRNA + H(+)</text>
        <dbReference type="Rhea" id="RHEA:54448"/>
        <dbReference type="Rhea" id="RHEA-COMP:10123"/>
        <dbReference type="Rhea" id="RHEA-COMP:13883"/>
        <dbReference type="ChEBI" id="CHEBI:15377"/>
        <dbReference type="ChEBI" id="CHEBI:15378"/>
        <dbReference type="ChEBI" id="CHEBI:59874"/>
        <dbReference type="ChEBI" id="CHEBI:78442"/>
        <dbReference type="ChEBI" id="CHEBI:138191"/>
        <dbReference type="EC" id="3.1.1.29"/>
    </reaction>
</comment>
<comment type="subunit">
    <text evidence="1">Monomer.</text>
</comment>
<comment type="subcellular location">
    <subcellularLocation>
        <location evidence="1">Cytoplasm</location>
    </subcellularLocation>
</comment>
<comment type="similarity">
    <text evidence="1">Belongs to the PTH family.</text>
</comment>
<feature type="chain" id="PRO_0000187852" description="Peptidyl-tRNA hydrolase">
    <location>
        <begin position="1"/>
        <end position="196"/>
    </location>
</feature>
<feature type="active site" description="Proton acceptor" evidence="1">
    <location>
        <position position="23"/>
    </location>
</feature>
<feature type="binding site" evidence="1">
    <location>
        <position position="18"/>
    </location>
    <ligand>
        <name>tRNA</name>
        <dbReference type="ChEBI" id="CHEBI:17843"/>
    </ligand>
</feature>
<feature type="binding site" evidence="1">
    <location>
        <position position="69"/>
    </location>
    <ligand>
        <name>tRNA</name>
        <dbReference type="ChEBI" id="CHEBI:17843"/>
    </ligand>
</feature>
<feature type="binding site" evidence="1">
    <location>
        <position position="71"/>
    </location>
    <ligand>
        <name>tRNA</name>
        <dbReference type="ChEBI" id="CHEBI:17843"/>
    </ligand>
</feature>
<feature type="binding site" evidence="1">
    <location>
        <position position="117"/>
    </location>
    <ligand>
        <name>tRNA</name>
        <dbReference type="ChEBI" id="CHEBI:17843"/>
    </ligand>
</feature>
<feature type="site" description="Discriminates between blocked and unblocked aminoacyl-tRNA" evidence="1">
    <location>
        <position position="13"/>
    </location>
</feature>
<feature type="site" description="Stabilizes the basic form of H active site to accept a proton" evidence="1">
    <location>
        <position position="96"/>
    </location>
</feature>
<organism>
    <name type="scientific">Vibrio vulnificus (strain CMCP6)</name>
    <dbReference type="NCBI Taxonomy" id="216895"/>
    <lineage>
        <taxon>Bacteria</taxon>
        <taxon>Pseudomonadati</taxon>
        <taxon>Pseudomonadota</taxon>
        <taxon>Gammaproteobacteria</taxon>
        <taxon>Vibrionales</taxon>
        <taxon>Vibrionaceae</taxon>
        <taxon>Vibrio</taxon>
    </lineage>
</organism>
<accession>Q8DFF4</accession>
<gene>
    <name evidence="1" type="primary">pth</name>
    <name type="ordered locus">VV1_0258</name>
</gene>
<evidence type="ECO:0000255" key="1">
    <source>
        <dbReference type="HAMAP-Rule" id="MF_00083"/>
    </source>
</evidence>
<name>PTH_VIBVU</name>